<protein>
    <recommendedName>
        <fullName evidence="1">Tyrosine--tRNA ligase</fullName>
        <ecNumber evidence="1">6.1.1.1</ecNumber>
    </recommendedName>
    <alternativeName>
        <fullName evidence="1">Tyrosyl-tRNA synthetase</fullName>
        <shortName evidence="1">TyrRS</shortName>
    </alternativeName>
</protein>
<evidence type="ECO:0000255" key="1">
    <source>
        <dbReference type="HAMAP-Rule" id="MF_02006"/>
    </source>
</evidence>
<gene>
    <name evidence="1" type="primary">tyrS</name>
    <name type="ordered locus">SAS1655</name>
</gene>
<sequence>MTNVLIEDLKWRGLIYQQTDEQGIEDLLNKEQVTLYCGADPTADSLHIGHLLPFLTLRRFQEHGHRPIVLIGGGTGMIGDPSGKSEERVLQTEEQVDKNIEGISKQMHNIFEFGTDHGAVLVNNRDWLGQISLISFLRDYGKHVGVNYMLGKDSIQSRLEHGISYTEFTYTILQAIDFGHLNRELNCKIQVGGSDQWGNITSGIELMRRMYGQTDAYGLTIPLVTKSDGKKFGKSESGAVWLDAEKTSPYEFYQFWINQSDEDVIKFLKYFTFLGKEEIDRLEQSKNEAPHLREAQKTLAEEVTKFIHGEDALNDAIRISQALFSGDLKSLSAKELKDGFKDVPQVTLSNDTTNIVEVLIETGISPSKRQAREDVNNGAIYINGERQQDVNYALAPEDKIDGEFTIIRRGKKKYFMVNYQ</sequence>
<reference key="1">
    <citation type="journal article" date="2004" name="Proc. Natl. Acad. Sci. U.S.A.">
        <title>Complete genomes of two clinical Staphylococcus aureus strains: evidence for the rapid evolution of virulence and drug resistance.</title>
        <authorList>
            <person name="Holden M.T.G."/>
            <person name="Feil E.J."/>
            <person name="Lindsay J.A."/>
            <person name="Peacock S.J."/>
            <person name="Day N.P.J."/>
            <person name="Enright M.C."/>
            <person name="Foster T.J."/>
            <person name="Moore C.E."/>
            <person name="Hurst L."/>
            <person name="Atkin R."/>
            <person name="Barron A."/>
            <person name="Bason N."/>
            <person name="Bentley S.D."/>
            <person name="Chillingworth C."/>
            <person name="Chillingworth T."/>
            <person name="Churcher C."/>
            <person name="Clark L."/>
            <person name="Corton C."/>
            <person name="Cronin A."/>
            <person name="Doggett J."/>
            <person name="Dowd L."/>
            <person name="Feltwell T."/>
            <person name="Hance Z."/>
            <person name="Harris B."/>
            <person name="Hauser H."/>
            <person name="Holroyd S."/>
            <person name="Jagels K."/>
            <person name="James K.D."/>
            <person name="Lennard N."/>
            <person name="Line A."/>
            <person name="Mayes R."/>
            <person name="Moule S."/>
            <person name="Mungall K."/>
            <person name="Ormond D."/>
            <person name="Quail M.A."/>
            <person name="Rabbinowitsch E."/>
            <person name="Rutherford K.M."/>
            <person name="Sanders M."/>
            <person name="Sharp S."/>
            <person name="Simmonds M."/>
            <person name="Stevens K."/>
            <person name="Whitehead S."/>
            <person name="Barrell B.G."/>
            <person name="Spratt B.G."/>
            <person name="Parkhill J."/>
        </authorList>
    </citation>
    <scope>NUCLEOTIDE SEQUENCE [LARGE SCALE GENOMIC DNA]</scope>
    <source>
        <strain>MSSA476</strain>
    </source>
</reference>
<proteinExistence type="inferred from homology"/>
<feature type="chain" id="PRO_0000234775" description="Tyrosine--tRNA ligase">
    <location>
        <begin position="1"/>
        <end position="420"/>
    </location>
</feature>
<feature type="domain" description="S4 RNA-binding" evidence="1">
    <location>
        <begin position="353"/>
        <end position="420"/>
    </location>
</feature>
<feature type="short sequence motif" description="'HIGH' region">
    <location>
        <begin position="41"/>
        <end position="50"/>
    </location>
</feature>
<feature type="short sequence motif" description="'KMSKS' region">
    <location>
        <begin position="231"/>
        <end position="235"/>
    </location>
</feature>
<feature type="binding site" evidence="1">
    <location>
        <position position="36"/>
    </location>
    <ligand>
        <name>L-tyrosine</name>
        <dbReference type="ChEBI" id="CHEBI:58315"/>
    </ligand>
</feature>
<feature type="binding site" evidence="1">
    <location>
        <position position="170"/>
    </location>
    <ligand>
        <name>L-tyrosine</name>
        <dbReference type="ChEBI" id="CHEBI:58315"/>
    </ligand>
</feature>
<feature type="binding site" evidence="1">
    <location>
        <position position="174"/>
    </location>
    <ligand>
        <name>L-tyrosine</name>
        <dbReference type="ChEBI" id="CHEBI:58315"/>
    </ligand>
</feature>
<feature type="binding site" evidence="1">
    <location>
        <position position="234"/>
    </location>
    <ligand>
        <name>ATP</name>
        <dbReference type="ChEBI" id="CHEBI:30616"/>
    </ligand>
</feature>
<accession>Q6G8J9</accession>
<name>SYY_STAAS</name>
<keyword id="KW-0030">Aminoacyl-tRNA synthetase</keyword>
<keyword id="KW-0067">ATP-binding</keyword>
<keyword id="KW-0963">Cytoplasm</keyword>
<keyword id="KW-0436">Ligase</keyword>
<keyword id="KW-0547">Nucleotide-binding</keyword>
<keyword id="KW-0648">Protein biosynthesis</keyword>
<keyword id="KW-0694">RNA-binding</keyword>
<comment type="function">
    <text evidence="1">Catalyzes the attachment of tyrosine to tRNA(Tyr) in a two-step reaction: tyrosine is first activated by ATP to form Tyr-AMP and then transferred to the acceptor end of tRNA(Tyr).</text>
</comment>
<comment type="catalytic activity">
    <reaction evidence="1">
        <text>tRNA(Tyr) + L-tyrosine + ATP = L-tyrosyl-tRNA(Tyr) + AMP + diphosphate + H(+)</text>
        <dbReference type="Rhea" id="RHEA:10220"/>
        <dbReference type="Rhea" id="RHEA-COMP:9706"/>
        <dbReference type="Rhea" id="RHEA-COMP:9707"/>
        <dbReference type="ChEBI" id="CHEBI:15378"/>
        <dbReference type="ChEBI" id="CHEBI:30616"/>
        <dbReference type="ChEBI" id="CHEBI:33019"/>
        <dbReference type="ChEBI" id="CHEBI:58315"/>
        <dbReference type="ChEBI" id="CHEBI:78442"/>
        <dbReference type="ChEBI" id="CHEBI:78536"/>
        <dbReference type="ChEBI" id="CHEBI:456215"/>
        <dbReference type="EC" id="6.1.1.1"/>
    </reaction>
</comment>
<comment type="subunit">
    <text evidence="1">Homodimer.</text>
</comment>
<comment type="subcellular location">
    <subcellularLocation>
        <location evidence="1">Cytoplasm</location>
    </subcellularLocation>
</comment>
<comment type="similarity">
    <text evidence="1">Belongs to the class-I aminoacyl-tRNA synthetase family. TyrS type 1 subfamily.</text>
</comment>
<dbReference type="EC" id="6.1.1.1" evidence="1"/>
<dbReference type="EMBL" id="BX571857">
    <property type="protein sequence ID" value="CAG43457.1"/>
    <property type="molecule type" value="Genomic_DNA"/>
</dbReference>
<dbReference type="RefSeq" id="WP_000186029.1">
    <property type="nucleotide sequence ID" value="NC_002953.3"/>
</dbReference>
<dbReference type="SMR" id="Q6G8J9"/>
<dbReference type="BindingDB" id="Q6G8J9"/>
<dbReference type="KEGG" id="sas:SAS1655"/>
<dbReference type="HOGENOM" id="CLU_024003_0_3_9"/>
<dbReference type="GO" id="GO:0005829">
    <property type="term" value="C:cytosol"/>
    <property type="evidence" value="ECO:0007669"/>
    <property type="project" value="TreeGrafter"/>
</dbReference>
<dbReference type="GO" id="GO:0005524">
    <property type="term" value="F:ATP binding"/>
    <property type="evidence" value="ECO:0007669"/>
    <property type="project" value="UniProtKB-UniRule"/>
</dbReference>
<dbReference type="GO" id="GO:0003723">
    <property type="term" value="F:RNA binding"/>
    <property type="evidence" value="ECO:0007669"/>
    <property type="project" value="UniProtKB-KW"/>
</dbReference>
<dbReference type="GO" id="GO:0004831">
    <property type="term" value="F:tyrosine-tRNA ligase activity"/>
    <property type="evidence" value="ECO:0007669"/>
    <property type="project" value="UniProtKB-UniRule"/>
</dbReference>
<dbReference type="GO" id="GO:0006437">
    <property type="term" value="P:tyrosyl-tRNA aminoacylation"/>
    <property type="evidence" value="ECO:0007669"/>
    <property type="project" value="UniProtKB-UniRule"/>
</dbReference>
<dbReference type="CDD" id="cd00165">
    <property type="entry name" value="S4"/>
    <property type="match status" value="1"/>
</dbReference>
<dbReference type="CDD" id="cd00395">
    <property type="entry name" value="Tyr_Trp_RS_core"/>
    <property type="match status" value="1"/>
</dbReference>
<dbReference type="FunFam" id="1.10.240.10:FF:000001">
    <property type="entry name" value="Tyrosine--tRNA ligase"/>
    <property type="match status" value="1"/>
</dbReference>
<dbReference type="FunFam" id="3.10.290.10:FF:000012">
    <property type="entry name" value="Tyrosine--tRNA ligase"/>
    <property type="match status" value="1"/>
</dbReference>
<dbReference type="FunFam" id="3.40.50.620:FF:000008">
    <property type="entry name" value="Tyrosine--tRNA ligase"/>
    <property type="match status" value="1"/>
</dbReference>
<dbReference type="Gene3D" id="3.40.50.620">
    <property type="entry name" value="HUPs"/>
    <property type="match status" value="1"/>
</dbReference>
<dbReference type="Gene3D" id="3.10.290.10">
    <property type="entry name" value="RNA-binding S4 domain"/>
    <property type="match status" value="1"/>
</dbReference>
<dbReference type="Gene3D" id="1.10.240.10">
    <property type="entry name" value="Tyrosyl-Transfer RNA Synthetase"/>
    <property type="match status" value="1"/>
</dbReference>
<dbReference type="HAMAP" id="MF_02006">
    <property type="entry name" value="Tyr_tRNA_synth_type1"/>
    <property type="match status" value="1"/>
</dbReference>
<dbReference type="InterPro" id="IPR001412">
    <property type="entry name" value="aa-tRNA-synth_I_CS"/>
</dbReference>
<dbReference type="InterPro" id="IPR002305">
    <property type="entry name" value="aa-tRNA-synth_Ic"/>
</dbReference>
<dbReference type="InterPro" id="IPR014729">
    <property type="entry name" value="Rossmann-like_a/b/a_fold"/>
</dbReference>
<dbReference type="InterPro" id="IPR002942">
    <property type="entry name" value="S4_RNA-bd"/>
</dbReference>
<dbReference type="InterPro" id="IPR036986">
    <property type="entry name" value="S4_RNA-bd_sf"/>
</dbReference>
<dbReference type="InterPro" id="IPR054608">
    <property type="entry name" value="SYY-like_C"/>
</dbReference>
<dbReference type="InterPro" id="IPR002307">
    <property type="entry name" value="Tyr-tRNA-ligase"/>
</dbReference>
<dbReference type="InterPro" id="IPR024088">
    <property type="entry name" value="Tyr-tRNA-ligase_bac-type"/>
</dbReference>
<dbReference type="InterPro" id="IPR024107">
    <property type="entry name" value="Tyr-tRNA-ligase_bac_1"/>
</dbReference>
<dbReference type="NCBIfam" id="TIGR00234">
    <property type="entry name" value="tyrS"/>
    <property type="match status" value="1"/>
</dbReference>
<dbReference type="PANTHER" id="PTHR11766:SF0">
    <property type="entry name" value="TYROSINE--TRNA LIGASE, MITOCHONDRIAL"/>
    <property type="match status" value="1"/>
</dbReference>
<dbReference type="PANTHER" id="PTHR11766">
    <property type="entry name" value="TYROSYL-TRNA SYNTHETASE"/>
    <property type="match status" value="1"/>
</dbReference>
<dbReference type="Pfam" id="PF22421">
    <property type="entry name" value="SYY_C-terminal"/>
    <property type="match status" value="1"/>
</dbReference>
<dbReference type="Pfam" id="PF00579">
    <property type="entry name" value="tRNA-synt_1b"/>
    <property type="match status" value="1"/>
</dbReference>
<dbReference type="PRINTS" id="PR01040">
    <property type="entry name" value="TRNASYNTHTYR"/>
</dbReference>
<dbReference type="SMART" id="SM00363">
    <property type="entry name" value="S4"/>
    <property type="match status" value="1"/>
</dbReference>
<dbReference type="SUPFAM" id="SSF55174">
    <property type="entry name" value="Alpha-L RNA-binding motif"/>
    <property type="match status" value="1"/>
</dbReference>
<dbReference type="SUPFAM" id="SSF52374">
    <property type="entry name" value="Nucleotidylyl transferase"/>
    <property type="match status" value="1"/>
</dbReference>
<dbReference type="PROSITE" id="PS00178">
    <property type="entry name" value="AA_TRNA_LIGASE_I"/>
    <property type="match status" value="1"/>
</dbReference>
<dbReference type="PROSITE" id="PS50889">
    <property type="entry name" value="S4"/>
    <property type="match status" value="1"/>
</dbReference>
<organism>
    <name type="scientific">Staphylococcus aureus (strain MSSA476)</name>
    <dbReference type="NCBI Taxonomy" id="282459"/>
    <lineage>
        <taxon>Bacteria</taxon>
        <taxon>Bacillati</taxon>
        <taxon>Bacillota</taxon>
        <taxon>Bacilli</taxon>
        <taxon>Bacillales</taxon>
        <taxon>Staphylococcaceae</taxon>
        <taxon>Staphylococcus</taxon>
    </lineage>
</organism>